<comment type="function">
    <text evidence="3">Aux/IAA proteins are short-lived transcriptional factors that function as repressors of early auxin response genes at low auxin concentrations. Repression is thought to result from the interaction with auxin response factors (ARFs), proteins that bind to the auxin-responsive promoter element (AuxRE). Formation of heterodimers with ARF proteins may alter their ability to modulate early auxin response genes expression.</text>
</comment>
<comment type="subunit">
    <text evidence="1">Homodimers and heterodimers.</text>
</comment>
<comment type="interaction">
    <interactant intactId="EBI-3946487">
        <id>P33078</id>
    </interactant>
    <interactant intactId="EBI-3947588">
        <id>Q93YR9</id>
        <label>ARF16</label>
    </interactant>
    <organismsDiffer>false</organismsDiffer>
    <experiments>4</experiments>
</comment>
<comment type="interaction">
    <interactant intactId="EBI-3946487">
        <id>P33078</id>
    </interactant>
    <interactant intactId="EBI-529887">
        <id>Q8RYC8</id>
        <label>ARF19</label>
    </interactant>
    <organismsDiffer>false</organismsDiffer>
    <experiments>3</experiments>
</comment>
<comment type="interaction">
    <interactant intactId="EBI-3946487">
        <id>P33078</id>
    </interactant>
    <interactant intactId="EBI-25523851">
        <id>Q9FIK2</id>
        <label>At5g47790</label>
    </interactant>
    <organismsDiffer>false</organismsDiffer>
    <experiments>3</experiments>
</comment>
<comment type="interaction">
    <interactant intactId="EBI-3946487">
        <id>P33078</id>
    </interactant>
    <interactant intactId="EBI-630505">
        <id>P49677</id>
        <label>IAA1</label>
    </interactant>
    <organismsDiffer>false</organismsDiffer>
    <experiments>6</experiments>
</comment>
<comment type="interaction">
    <interactant intactId="EBI-3946487">
        <id>P33078</id>
    </interactant>
    <interactant intactId="EBI-3946434">
        <id>Q38828</id>
        <label>IAA10</label>
    </interactant>
    <organismsDiffer>false</organismsDiffer>
    <experiments>6</experiments>
</comment>
<comment type="interaction">
    <interactant intactId="EBI-3946487">
        <id>P33078</id>
    </interactant>
    <interactant intactId="EBI-1554143">
        <id>Q38831</id>
        <label>IAA13</label>
    </interactant>
    <organismsDiffer>false</organismsDiffer>
    <experiments>6</experiments>
</comment>
<comment type="interaction">
    <interactant intactId="EBI-3946487">
        <id>P33078</id>
    </interactant>
    <interactant intactId="EBI-2295562">
        <id>Q38832</id>
        <label>IAA14</label>
    </interactant>
    <organismsDiffer>false</organismsDiffer>
    <experiments>4</experiments>
</comment>
<comment type="interaction">
    <interactant intactId="EBI-3946487">
        <id>P33078</id>
    </interactant>
    <interactant intactId="EBI-25524519">
        <id>A0A2H1ZEF6</id>
        <label>IAA15</label>
    </interactant>
    <organismsDiffer>false</organismsDiffer>
    <experiments>3</experiments>
</comment>
<comment type="interaction">
    <interactant intactId="EBI-3946487">
        <id>P33078</id>
    </interactant>
    <interactant intactId="EBI-632231">
        <id>O24407</id>
        <label>IAA16</label>
    </interactant>
    <organismsDiffer>false</organismsDiffer>
    <experiments>7</experiments>
</comment>
<comment type="interaction">
    <interactant intactId="EBI-3946487">
        <id>P33078</id>
    </interactant>
    <interactant intactId="EBI-632243">
        <id>P93830</id>
        <label>IAA17</label>
    </interactant>
    <organismsDiffer>false</organismsDiffer>
    <experiments>9</experiments>
</comment>
<comment type="interaction">
    <interactant intactId="EBI-3946487">
        <id>P33078</id>
    </interactant>
    <interactant intactId="EBI-632257">
        <id>O24409</id>
        <label>IAA19</label>
    </interactant>
    <organismsDiffer>false</organismsDiffer>
    <experiments>6</experiments>
</comment>
<comment type="interaction">
    <interactant intactId="EBI-3946487">
        <id>P33078</id>
    </interactant>
    <interactant intactId="EBI-632343">
        <id>P49678</id>
        <label>IAA2</label>
    </interactant>
    <organismsDiffer>false</organismsDiffer>
    <experiments>7</experiments>
</comment>
<comment type="interaction">
    <interactant intactId="EBI-3946487">
        <id>P33078</id>
    </interactant>
    <interactant intactId="EBI-632272">
        <id>O24410</id>
        <label>IAA20</label>
    </interactant>
    <organismsDiffer>false</organismsDiffer>
    <experiments>4</experiments>
</comment>
<comment type="interaction">
    <interactant intactId="EBI-3946487">
        <id>P33078</id>
    </interactant>
    <interactant intactId="EBI-3947418">
        <id>Q8LAL2</id>
        <label>IAA26</label>
    </interactant>
    <organismsDiffer>false</organismsDiffer>
    <experiments>5</experiments>
</comment>
<comment type="interaction">
    <interactant intactId="EBI-3946487">
        <id>P33078</id>
    </interactant>
    <interactant intactId="EBI-3946677">
        <id>Q9ZSY8</id>
        <label>IAA27</label>
    </interactant>
    <organismsDiffer>false</organismsDiffer>
    <experiments>6</experiments>
</comment>
<comment type="interaction">
    <interactant intactId="EBI-3946487">
        <id>P33078</id>
    </interactant>
    <interactant intactId="EBI-3133404">
        <id>Q9XFM0</id>
        <label>IAA28</label>
    </interactant>
    <organismsDiffer>false</organismsDiffer>
    <experiments>6</experiments>
</comment>
<comment type="interaction">
    <interactant intactId="EBI-3946487">
        <id>P33078</id>
    </interactant>
    <interactant intactId="EBI-307174">
        <id>Q38822</id>
        <label>IAA3</label>
    </interactant>
    <organismsDiffer>false</organismsDiffer>
    <experiments>6</experiments>
</comment>
<comment type="interaction">
    <interactant intactId="EBI-3946487">
        <id>P33078</id>
    </interactant>
    <interactant intactId="EBI-3946408">
        <id>Q8H174</id>
        <label>IAA31</label>
    </interactant>
    <organismsDiffer>false</organismsDiffer>
    <experiments>6</experiments>
</comment>
<comment type="interaction">
    <interactant intactId="EBI-3946487">
        <id>P33078</id>
    </interactant>
    <interactant intactId="EBI-3946459">
        <id>Q9C5X0</id>
        <label>IAA34</label>
    </interactant>
    <organismsDiffer>false</organismsDiffer>
    <experiments>6</experiments>
</comment>
<comment type="interaction">
    <interactant intactId="EBI-3946487">
        <id>P33078</id>
    </interactant>
    <interactant intactId="EBI-632187">
        <id>P33077</id>
        <label>IAA4</label>
    </interactant>
    <organismsDiffer>false</organismsDiffer>
    <experiments>6</experiments>
</comment>
<comment type="interaction">
    <interactant intactId="EBI-3946487">
        <id>P33078</id>
    </interactant>
    <interactant intactId="EBI-1554124">
        <id>Q38824</id>
        <label>IAA6</label>
    </interactant>
    <organismsDiffer>false</organismsDiffer>
    <experiments>5</experiments>
</comment>
<comment type="interaction">
    <interactant intactId="EBI-3946487">
        <id>P33078</id>
    </interactant>
    <interactant intactId="EBI-632200">
        <id>Q38826</id>
        <label>IAA8</label>
    </interactant>
    <organismsDiffer>false</organismsDiffer>
    <experiments>7</experiments>
</comment>
<comment type="interaction">
    <interactant intactId="EBI-3946487">
        <id>P33078</id>
    </interactant>
    <interactant intactId="EBI-1238013">
        <id>O22179</id>
        <label>MYB70</label>
    </interactant>
    <organismsDiffer>false</organismsDiffer>
    <experiments>3</experiments>
</comment>
<comment type="interaction">
    <interactant intactId="EBI-3946487">
        <id>P33078</id>
    </interactant>
    <interactant intactId="EBI-25506855">
        <id>O23160</id>
        <label>MYB73</label>
    </interactant>
    <organismsDiffer>false</organismsDiffer>
    <experiments>3</experiments>
</comment>
<comment type="interaction">
    <interactant intactId="EBI-3946487">
        <id>P33078</id>
    </interactant>
    <interactant intactId="EBI-4426144">
        <id>Q9C9L2</id>
        <label>TCP15</label>
    </interactant>
    <organismsDiffer>false</organismsDiffer>
    <experiments>3</experiments>
</comment>
<comment type="interaction">
    <interactant intactId="EBI-3946487">
        <id>P33078</id>
    </interactant>
    <interactant intactId="EBI-25522447">
        <id>Q9MAH8</id>
        <label>TCP3</label>
    </interactant>
    <organismsDiffer>false</organismsDiffer>
    <experiments>3</experiments>
</comment>
<comment type="subcellular location">
    <subcellularLocation>
        <location evidence="1">Nucleus</location>
    </subcellularLocation>
</comment>
<comment type="tissue specificity">
    <text evidence="4">Highly expressed in stems and flowers.</text>
</comment>
<comment type="induction">
    <text evidence="4">By auxin.</text>
</comment>
<comment type="domain">
    <text>The N-terminal half of the protein contains two conserved domains I and II. Domain I includes a slightly degenerated ERF-associated amphiphilic repression (EAR) motif which seems to be involved in the activity of transcriptional repression. Domain II is required for the correct degradation of the protein through the SCF-mediated ubiquitin-proteasome pathway. Interactions between Aux/IAA proteins and auxin response factors (ARFs) occur through their C-terminal dimerization domains III and IV.</text>
</comment>
<comment type="similarity">
    <text evidence="5">Belongs to the Aux/IAA family.</text>
</comment>
<comment type="sequence caution" evidence="5">
    <conflict type="erroneous gene model prediction">
        <sequence resource="EMBL-CDS" id="CAA37527"/>
    </conflict>
</comment>
<evidence type="ECO:0000250" key="1"/>
<evidence type="ECO:0000255" key="2">
    <source>
        <dbReference type="PROSITE-ProRule" id="PRU01081"/>
    </source>
</evidence>
<evidence type="ECO:0000269" key="3">
    <source>
    </source>
</evidence>
<evidence type="ECO:0000269" key="4">
    <source>
    </source>
</evidence>
<evidence type="ECO:0000305" key="5"/>
<organism>
    <name type="scientific">Arabidopsis thaliana</name>
    <name type="common">Mouse-ear cress</name>
    <dbReference type="NCBI Taxonomy" id="3702"/>
    <lineage>
        <taxon>Eukaryota</taxon>
        <taxon>Viridiplantae</taxon>
        <taxon>Streptophyta</taxon>
        <taxon>Embryophyta</taxon>
        <taxon>Tracheophyta</taxon>
        <taxon>Spermatophyta</taxon>
        <taxon>Magnoliopsida</taxon>
        <taxon>eudicotyledons</taxon>
        <taxon>Gunneridae</taxon>
        <taxon>Pentapetalae</taxon>
        <taxon>rosids</taxon>
        <taxon>malvids</taxon>
        <taxon>Brassicales</taxon>
        <taxon>Brassicaceae</taxon>
        <taxon>Camelineae</taxon>
        <taxon>Arabidopsis</taxon>
    </lineage>
</organism>
<gene>
    <name type="primary">IAA5</name>
    <name type="synonym">AUX2-27</name>
    <name type="ordered locus">At1g15580</name>
    <name type="ORF">T16N11.9</name>
</gene>
<accession>P33078</accession>
<accession>Q38823</accession>
<accession>Q8H1E0</accession>
<sequence>MANESNNLGLEITELRLGLPGDIVVSGESISGKKRASPEVEIDLKCEPAKKSQVVGWPPVCSYRRKNSLERTKSSYVKVSVDGAAFLRKIDLEMYKCYQDLASALQILFGCYINFDDTLKESECVPIYEDKDGDWMLAGDVPWEMFLGSCKRLRIMKRSCNRG</sequence>
<protein>
    <recommendedName>
        <fullName>Auxin-responsive protein IAA5</fullName>
    </recommendedName>
    <alternativeName>
        <fullName>Auxin-induced protein AUX2-27</fullName>
    </alternativeName>
    <alternativeName>
        <fullName>Indoleacetic acid-induced protein 5</fullName>
    </alternativeName>
</protein>
<proteinExistence type="evidence at protein level"/>
<reference key="1">
    <citation type="journal article" date="1990" name="Plant Mol. Biol.">
        <title>Structure and expression of two auxin-inducible genes from Arabidopsis.</title>
        <authorList>
            <person name="Conner T.W."/>
            <person name="Goekjian V.H."/>
            <person name="Lafayette P.R."/>
            <person name="Key J.L."/>
        </authorList>
    </citation>
    <scope>NUCLEOTIDE SEQUENCE [GENOMIC DNA]</scope>
    <source>
        <strain>cv. Columbia</strain>
    </source>
</reference>
<reference key="2">
    <citation type="journal article" date="2000" name="Nature">
        <title>Sequence and analysis of chromosome 1 of the plant Arabidopsis thaliana.</title>
        <authorList>
            <person name="Theologis A."/>
            <person name="Ecker J.R."/>
            <person name="Palm C.J."/>
            <person name="Federspiel N.A."/>
            <person name="Kaul S."/>
            <person name="White O."/>
            <person name="Alonso J."/>
            <person name="Altafi H."/>
            <person name="Araujo R."/>
            <person name="Bowman C.L."/>
            <person name="Brooks S.Y."/>
            <person name="Buehler E."/>
            <person name="Chan A."/>
            <person name="Chao Q."/>
            <person name="Chen H."/>
            <person name="Cheuk R.F."/>
            <person name="Chin C.W."/>
            <person name="Chung M.K."/>
            <person name="Conn L."/>
            <person name="Conway A.B."/>
            <person name="Conway A.R."/>
            <person name="Creasy T.H."/>
            <person name="Dewar K."/>
            <person name="Dunn P."/>
            <person name="Etgu P."/>
            <person name="Feldblyum T.V."/>
            <person name="Feng J.-D."/>
            <person name="Fong B."/>
            <person name="Fujii C.Y."/>
            <person name="Gill J.E."/>
            <person name="Goldsmith A.D."/>
            <person name="Haas B."/>
            <person name="Hansen N.F."/>
            <person name="Hughes B."/>
            <person name="Huizar L."/>
            <person name="Hunter J.L."/>
            <person name="Jenkins J."/>
            <person name="Johnson-Hopson C."/>
            <person name="Khan S."/>
            <person name="Khaykin E."/>
            <person name="Kim C.J."/>
            <person name="Koo H.L."/>
            <person name="Kremenetskaia I."/>
            <person name="Kurtz D.B."/>
            <person name="Kwan A."/>
            <person name="Lam B."/>
            <person name="Langin-Hooper S."/>
            <person name="Lee A."/>
            <person name="Lee J.M."/>
            <person name="Lenz C.A."/>
            <person name="Li J.H."/>
            <person name="Li Y.-P."/>
            <person name="Lin X."/>
            <person name="Liu S.X."/>
            <person name="Liu Z.A."/>
            <person name="Luros J.S."/>
            <person name="Maiti R."/>
            <person name="Marziali A."/>
            <person name="Militscher J."/>
            <person name="Miranda M."/>
            <person name="Nguyen M."/>
            <person name="Nierman W.C."/>
            <person name="Osborne B.I."/>
            <person name="Pai G."/>
            <person name="Peterson J."/>
            <person name="Pham P.K."/>
            <person name="Rizzo M."/>
            <person name="Rooney T."/>
            <person name="Rowley D."/>
            <person name="Sakano H."/>
            <person name="Salzberg S.L."/>
            <person name="Schwartz J.R."/>
            <person name="Shinn P."/>
            <person name="Southwick A.M."/>
            <person name="Sun H."/>
            <person name="Tallon L.J."/>
            <person name="Tambunga G."/>
            <person name="Toriumi M.J."/>
            <person name="Town C.D."/>
            <person name="Utterback T."/>
            <person name="Van Aken S."/>
            <person name="Vaysberg M."/>
            <person name="Vysotskaia V.S."/>
            <person name="Walker M."/>
            <person name="Wu D."/>
            <person name="Yu G."/>
            <person name="Fraser C.M."/>
            <person name="Venter J.C."/>
            <person name="Davis R.W."/>
        </authorList>
    </citation>
    <scope>NUCLEOTIDE SEQUENCE [LARGE SCALE GENOMIC DNA]</scope>
    <source>
        <strain>cv. Columbia</strain>
    </source>
</reference>
<reference key="3">
    <citation type="journal article" date="2017" name="Plant J.">
        <title>Araport11: a complete reannotation of the Arabidopsis thaliana reference genome.</title>
        <authorList>
            <person name="Cheng C.Y."/>
            <person name="Krishnakumar V."/>
            <person name="Chan A.P."/>
            <person name="Thibaud-Nissen F."/>
            <person name="Schobel S."/>
            <person name="Town C.D."/>
        </authorList>
    </citation>
    <scope>GENOME REANNOTATION</scope>
    <source>
        <strain>cv. Columbia</strain>
    </source>
</reference>
<reference key="4">
    <citation type="journal article" date="2003" name="Science">
        <title>Empirical analysis of transcriptional activity in the Arabidopsis genome.</title>
        <authorList>
            <person name="Yamada K."/>
            <person name="Lim J."/>
            <person name="Dale J.M."/>
            <person name="Chen H."/>
            <person name="Shinn P."/>
            <person name="Palm C.J."/>
            <person name="Southwick A.M."/>
            <person name="Wu H.C."/>
            <person name="Kim C.J."/>
            <person name="Nguyen M."/>
            <person name="Pham P.K."/>
            <person name="Cheuk R.F."/>
            <person name="Karlin-Newmann G."/>
            <person name="Liu S.X."/>
            <person name="Lam B."/>
            <person name="Sakano H."/>
            <person name="Wu T."/>
            <person name="Yu G."/>
            <person name="Miranda M."/>
            <person name="Quach H.L."/>
            <person name="Tripp M."/>
            <person name="Chang C.H."/>
            <person name="Lee J.M."/>
            <person name="Toriumi M.J."/>
            <person name="Chan M.M."/>
            <person name="Tang C.C."/>
            <person name="Onodera C.S."/>
            <person name="Deng J.M."/>
            <person name="Akiyama K."/>
            <person name="Ansari Y."/>
            <person name="Arakawa T."/>
            <person name="Banh J."/>
            <person name="Banno F."/>
            <person name="Bowser L."/>
            <person name="Brooks S.Y."/>
            <person name="Carninci P."/>
            <person name="Chao Q."/>
            <person name="Choy N."/>
            <person name="Enju A."/>
            <person name="Goldsmith A.D."/>
            <person name="Gurjal M."/>
            <person name="Hansen N.F."/>
            <person name="Hayashizaki Y."/>
            <person name="Johnson-Hopson C."/>
            <person name="Hsuan V.W."/>
            <person name="Iida K."/>
            <person name="Karnes M."/>
            <person name="Khan S."/>
            <person name="Koesema E."/>
            <person name="Ishida J."/>
            <person name="Jiang P.X."/>
            <person name="Jones T."/>
            <person name="Kawai J."/>
            <person name="Kamiya A."/>
            <person name="Meyers C."/>
            <person name="Nakajima M."/>
            <person name="Narusaka M."/>
            <person name="Seki M."/>
            <person name="Sakurai T."/>
            <person name="Satou M."/>
            <person name="Tamse R."/>
            <person name="Vaysberg M."/>
            <person name="Wallender E.K."/>
            <person name="Wong C."/>
            <person name="Yamamura Y."/>
            <person name="Yuan S."/>
            <person name="Shinozaki K."/>
            <person name="Davis R.W."/>
            <person name="Theologis A."/>
            <person name="Ecker J.R."/>
        </authorList>
    </citation>
    <scope>NUCLEOTIDE SEQUENCE [LARGE SCALE MRNA]</scope>
    <source>
        <strain>cv. Columbia</strain>
    </source>
</reference>
<reference key="5">
    <citation type="journal article" date="1995" name="J. Mol. Biol.">
        <title>The PS-IAA4/5-like family of early auxin-inducible mRNAs in Arabidopsis thaliana.</title>
        <authorList>
            <person name="Abel S."/>
            <person name="Nguyen M.D."/>
            <person name="Theologis A."/>
        </authorList>
    </citation>
    <scope>NUCLEOTIDE SEQUENCE [MRNA] OF 6-163</scope>
    <scope>TISSUE SPECIFICITY</scope>
    <scope>INDUCTION</scope>
    <source>
        <strain>cv. Columbia</strain>
    </source>
</reference>
<reference key="6">
    <citation type="journal article" date="2002" name="Plant Mol. Biol.">
        <title>Genetics of Aux/IAA and ARF action in plant growth and development.</title>
        <authorList>
            <person name="Liscum E."/>
            <person name="Reed J.W."/>
        </authorList>
    </citation>
    <scope>GENE FAMILY</scope>
    <scope>NOMENCLATURE</scope>
    <scope>FUNCTION</scope>
</reference>
<reference key="7">
    <citation type="journal article" date="2004" name="Plant Cell">
        <title>Aux/IAA proteins contain a potent transcriptional repression domain.</title>
        <authorList>
            <person name="Tiwari S.B."/>
            <person name="Hagen G."/>
            <person name="Guilfoyle T.J."/>
        </authorList>
    </citation>
    <scope>TRANSCRIPTIONAL REPRESSION DOMAIN</scope>
</reference>
<dbReference type="EMBL" id="X53436">
    <property type="protein sequence ID" value="CAA37527.1"/>
    <property type="status" value="ALT_SEQ"/>
    <property type="molecule type" value="Genomic_DNA"/>
</dbReference>
<dbReference type="EMBL" id="AC013453">
    <property type="protein sequence ID" value="AAF71983.1"/>
    <property type="molecule type" value="Genomic_DNA"/>
</dbReference>
<dbReference type="EMBL" id="CP002684">
    <property type="protein sequence ID" value="AEE29337.1"/>
    <property type="molecule type" value="Genomic_DNA"/>
</dbReference>
<dbReference type="EMBL" id="AY150496">
    <property type="protein sequence ID" value="AAN13012.1"/>
    <property type="molecule type" value="mRNA"/>
</dbReference>
<dbReference type="EMBL" id="U18407">
    <property type="protein sequence ID" value="AAC49046.1"/>
    <property type="molecule type" value="mRNA"/>
</dbReference>
<dbReference type="PIR" id="G86289">
    <property type="entry name" value="G86289"/>
</dbReference>
<dbReference type="PIR" id="S12244">
    <property type="entry name" value="S12244"/>
</dbReference>
<dbReference type="PIR" id="S58492">
    <property type="entry name" value="S58492"/>
</dbReference>
<dbReference type="RefSeq" id="NP_173011.1">
    <property type="nucleotide sequence ID" value="NM_101427.5"/>
</dbReference>
<dbReference type="SMR" id="P33078"/>
<dbReference type="BioGRID" id="23368">
    <property type="interactions" value="61"/>
</dbReference>
<dbReference type="ELM" id="P33078"/>
<dbReference type="FunCoup" id="P33078">
    <property type="interactions" value="289"/>
</dbReference>
<dbReference type="IntAct" id="P33078">
    <property type="interactions" value="49"/>
</dbReference>
<dbReference type="STRING" id="3702.P33078"/>
<dbReference type="PaxDb" id="3702-AT1G15580.1"/>
<dbReference type="EnsemblPlants" id="AT1G15580.1">
    <property type="protein sequence ID" value="AT1G15580.1"/>
    <property type="gene ID" value="AT1G15580"/>
</dbReference>
<dbReference type="GeneID" id="838128"/>
<dbReference type="Gramene" id="AT1G15580.1">
    <property type="protein sequence ID" value="AT1G15580.1"/>
    <property type="gene ID" value="AT1G15580"/>
</dbReference>
<dbReference type="KEGG" id="ath:AT1G15580"/>
<dbReference type="Araport" id="AT1G15580"/>
<dbReference type="TAIR" id="AT1G15580">
    <property type="gene designation" value="IAA5"/>
</dbReference>
<dbReference type="eggNOG" id="ENOG502RXTN">
    <property type="taxonomic scope" value="Eukaryota"/>
</dbReference>
<dbReference type="HOGENOM" id="CLU_049393_0_1_1"/>
<dbReference type="InParanoid" id="P33078"/>
<dbReference type="OMA" id="CVPIYED"/>
<dbReference type="OrthoDB" id="1926344at2759"/>
<dbReference type="PhylomeDB" id="P33078"/>
<dbReference type="PRO" id="PR:P33078"/>
<dbReference type="Proteomes" id="UP000006548">
    <property type="component" value="Chromosome 1"/>
</dbReference>
<dbReference type="ExpressionAtlas" id="P33078">
    <property type="expression patterns" value="baseline and differential"/>
</dbReference>
<dbReference type="GO" id="GO:0005634">
    <property type="term" value="C:nucleus"/>
    <property type="evidence" value="ECO:0007669"/>
    <property type="project" value="UniProtKB-SubCell"/>
</dbReference>
<dbReference type="GO" id="GO:0003700">
    <property type="term" value="F:DNA-binding transcription factor activity"/>
    <property type="evidence" value="ECO:0000250"/>
    <property type="project" value="TAIR"/>
</dbReference>
<dbReference type="GO" id="GO:0009734">
    <property type="term" value="P:auxin-activated signaling pathway"/>
    <property type="evidence" value="ECO:0007669"/>
    <property type="project" value="UniProtKB-KW"/>
</dbReference>
<dbReference type="GO" id="GO:0009733">
    <property type="term" value="P:response to auxin"/>
    <property type="evidence" value="ECO:0000270"/>
    <property type="project" value="TAIR"/>
</dbReference>
<dbReference type="Gene3D" id="3.10.20.90">
    <property type="entry name" value="Phosphatidylinositol 3-kinase Catalytic Subunit, Chain A, domain 1"/>
    <property type="match status" value="1"/>
</dbReference>
<dbReference type="InterPro" id="IPR033389">
    <property type="entry name" value="AUX/IAA_dom"/>
</dbReference>
<dbReference type="InterPro" id="IPR003311">
    <property type="entry name" value="AUX_IAA"/>
</dbReference>
<dbReference type="InterPro" id="IPR053793">
    <property type="entry name" value="PB1-like"/>
</dbReference>
<dbReference type="PANTHER" id="PTHR31734">
    <property type="entry name" value="AUXIN-RESPONSIVE PROTEIN IAA17"/>
    <property type="match status" value="1"/>
</dbReference>
<dbReference type="PANTHER" id="PTHR31734:SF87">
    <property type="entry name" value="AUXIN-RESPONSIVE PROTEIN IAA5"/>
    <property type="match status" value="1"/>
</dbReference>
<dbReference type="Pfam" id="PF02309">
    <property type="entry name" value="AUX_IAA"/>
    <property type="match status" value="1"/>
</dbReference>
<dbReference type="SUPFAM" id="SSF54277">
    <property type="entry name" value="CAD &amp; PB1 domains"/>
    <property type="match status" value="1"/>
</dbReference>
<dbReference type="PROSITE" id="PS51745">
    <property type="entry name" value="PB1"/>
    <property type="match status" value="1"/>
</dbReference>
<feature type="chain" id="PRO_0000112836" description="Auxin-responsive protein IAA5">
    <location>
        <begin position="1"/>
        <end position="163"/>
    </location>
</feature>
<feature type="domain" description="PB1" evidence="2">
    <location>
        <begin position="74"/>
        <end position="160"/>
    </location>
</feature>
<feature type="short sequence motif" description="EAR-like (transcriptional repression)">
    <location>
        <begin position="15"/>
        <end position="19"/>
    </location>
</feature>
<feature type="sequence conflict" description="In Ref. 5; AAC49046." evidence="5" ref="5">
    <original>NN</original>
    <variation>GR</variation>
    <location>
        <begin position="6"/>
        <end position="7"/>
    </location>
</feature>
<keyword id="KW-0927">Auxin signaling pathway</keyword>
<keyword id="KW-0539">Nucleus</keyword>
<keyword id="KW-1185">Reference proteome</keyword>
<keyword id="KW-0678">Repressor</keyword>
<keyword id="KW-0804">Transcription</keyword>
<keyword id="KW-0805">Transcription regulation</keyword>
<name>IAA5_ARATH</name>